<sequence>MKRFMQIWKPAVVGFLLLTLMCGVVYPGIVTIFASAAFHDKANGSIIEEKRADGTTRKVGSAEIGQTFTKPEYLIGRAASDGAATNLNPTSEEQKQLVEKRIAWWHKLDPTNNRVIPMDLVTASASGVDPDISEAAAAYQVDRISRERGISTKQVKEIIAEHTSDRLLGFWGEPTVNVLQVNLALDRLKM</sequence>
<dbReference type="EMBL" id="CP001175">
    <property type="protein sequence ID" value="ACK41187.1"/>
    <property type="molecule type" value="Genomic_DNA"/>
</dbReference>
<dbReference type="RefSeq" id="WP_012582346.1">
    <property type="nucleotide sequence ID" value="NC_011660.1"/>
</dbReference>
<dbReference type="SMR" id="B8DAW2"/>
<dbReference type="KEGG" id="lmh:LMHCC_2856"/>
<dbReference type="HOGENOM" id="CLU_077094_2_0_9"/>
<dbReference type="GO" id="GO:0005886">
    <property type="term" value="C:plasma membrane"/>
    <property type="evidence" value="ECO:0007669"/>
    <property type="project" value="UniProtKB-SubCell"/>
</dbReference>
<dbReference type="GO" id="GO:0005524">
    <property type="term" value="F:ATP binding"/>
    <property type="evidence" value="ECO:0007669"/>
    <property type="project" value="UniProtKB-UniRule"/>
</dbReference>
<dbReference type="GO" id="GO:0008556">
    <property type="term" value="F:P-type potassium transmembrane transporter activity"/>
    <property type="evidence" value="ECO:0007669"/>
    <property type="project" value="InterPro"/>
</dbReference>
<dbReference type="HAMAP" id="MF_00276">
    <property type="entry name" value="KdpC"/>
    <property type="match status" value="1"/>
</dbReference>
<dbReference type="InterPro" id="IPR003820">
    <property type="entry name" value="KdpC"/>
</dbReference>
<dbReference type="NCBIfam" id="TIGR00681">
    <property type="entry name" value="kdpC"/>
    <property type="match status" value="1"/>
</dbReference>
<dbReference type="PANTHER" id="PTHR30042">
    <property type="entry name" value="POTASSIUM-TRANSPORTING ATPASE C CHAIN"/>
    <property type="match status" value="1"/>
</dbReference>
<dbReference type="PANTHER" id="PTHR30042:SF2">
    <property type="entry name" value="POTASSIUM-TRANSPORTING ATPASE KDPC SUBUNIT"/>
    <property type="match status" value="1"/>
</dbReference>
<dbReference type="Pfam" id="PF02669">
    <property type="entry name" value="KdpC"/>
    <property type="match status" value="1"/>
</dbReference>
<dbReference type="PIRSF" id="PIRSF001296">
    <property type="entry name" value="K_ATPase_KdpC"/>
    <property type="match status" value="1"/>
</dbReference>
<comment type="function">
    <text evidence="1">Part of the high-affinity ATP-driven potassium transport (or Kdp) system, which catalyzes the hydrolysis of ATP coupled with the electrogenic transport of potassium into the cytoplasm. This subunit acts as a catalytic chaperone that increases the ATP-binding affinity of the ATP-hydrolyzing subunit KdpB by the formation of a transient KdpB/KdpC/ATP ternary complex.</text>
</comment>
<comment type="subunit">
    <text evidence="1">The system is composed of three essential subunits: KdpA, KdpB and KdpC.</text>
</comment>
<comment type="subcellular location">
    <subcellularLocation>
        <location evidence="1">Cell membrane</location>
        <topology evidence="1">Single-pass membrane protein</topology>
    </subcellularLocation>
</comment>
<comment type="similarity">
    <text evidence="1">Belongs to the KdpC family.</text>
</comment>
<reference key="1">
    <citation type="journal article" date="2011" name="J. Bacteriol.">
        <title>Genome sequence of lineage III Listeria monocytogenes strain HCC23.</title>
        <authorList>
            <person name="Steele C.L."/>
            <person name="Donaldson J.R."/>
            <person name="Paul D."/>
            <person name="Banes M.M."/>
            <person name="Arick T."/>
            <person name="Bridges S.M."/>
            <person name="Lawrence M.L."/>
        </authorList>
    </citation>
    <scope>NUCLEOTIDE SEQUENCE [LARGE SCALE GENOMIC DNA]</scope>
    <source>
        <strain>HCC23</strain>
    </source>
</reference>
<accession>B8DAW2</accession>
<gene>
    <name evidence="1" type="primary">kdpC</name>
    <name type="ordered locus">LMHCC_2856</name>
</gene>
<keyword id="KW-0067">ATP-binding</keyword>
<keyword id="KW-1003">Cell membrane</keyword>
<keyword id="KW-0406">Ion transport</keyword>
<keyword id="KW-0472">Membrane</keyword>
<keyword id="KW-0547">Nucleotide-binding</keyword>
<keyword id="KW-0630">Potassium</keyword>
<keyword id="KW-0633">Potassium transport</keyword>
<keyword id="KW-0812">Transmembrane</keyword>
<keyword id="KW-1133">Transmembrane helix</keyword>
<keyword id="KW-0813">Transport</keyword>
<proteinExistence type="inferred from homology"/>
<feature type="chain" id="PRO_1000132518" description="Potassium-transporting ATPase KdpC subunit">
    <location>
        <begin position="1"/>
        <end position="190"/>
    </location>
</feature>
<feature type="transmembrane region" description="Helical" evidence="1">
    <location>
        <begin position="13"/>
        <end position="33"/>
    </location>
</feature>
<evidence type="ECO:0000255" key="1">
    <source>
        <dbReference type="HAMAP-Rule" id="MF_00276"/>
    </source>
</evidence>
<organism>
    <name type="scientific">Listeria monocytogenes serotype 4a (strain HCC23)</name>
    <dbReference type="NCBI Taxonomy" id="552536"/>
    <lineage>
        <taxon>Bacteria</taxon>
        <taxon>Bacillati</taxon>
        <taxon>Bacillota</taxon>
        <taxon>Bacilli</taxon>
        <taxon>Bacillales</taxon>
        <taxon>Listeriaceae</taxon>
        <taxon>Listeria</taxon>
    </lineage>
</organism>
<name>KDPC_LISMH</name>
<protein>
    <recommendedName>
        <fullName evidence="1">Potassium-transporting ATPase KdpC subunit</fullName>
    </recommendedName>
    <alternativeName>
        <fullName evidence="1">ATP phosphohydrolase [potassium-transporting] C chain</fullName>
    </alternativeName>
    <alternativeName>
        <fullName evidence="1">Potassium-binding and translocating subunit C</fullName>
    </alternativeName>
    <alternativeName>
        <fullName evidence="1">Potassium-translocating ATPase C chain</fullName>
    </alternativeName>
</protein>